<name>FTCD_DICDI</name>
<gene>
    <name type="primary">ftcd</name>
    <name type="ORF">DDB_G0287977</name>
</gene>
<sequence>MNKLVECVPNFSEGRDQTIIDAISKAIRDTAGCTLLDVDPGKSTNRTVYTFVGCPDSIVNGAINATKVAFKLIDMTKHHGEHPRMGALDVCPFVPVRNVTMEECVNCSKEFGKRISEEIGVPIFLYEEASTQSYRKQLKQIRQGEYEGLEEKLKEEKWKPDFGPAKFIPSYGASVTGARSFLIAYNVNILGTKEQAHRIALNVREAGRGDNEPGRLKFLKGIGWFVDEYNLAQVSMNLDNYRETGVHTVFEECSKDARELNLGVAGSEIVGLVPLEAILMAADYYIAKENLFIIDEALKVRLAIERLGLSSCSFFDPKKRIIDYMVQEDLKVTQPLASMSVRGFVELLGSRTPAPGGGSASALIAAMGAGLGAMTGWMTFGKKKFEALDSIMRELLPPLDKAMRDLIPYIDADTNAFNDYIKAMGTPKGPQRDIAIDKALKQAINIPLSTMKISNTCWGPLLKMAQYGNLASKSDLEVGCKSLETGIWGAHRNVSINLLDCKDAQFVESTTKEANEILKNAQESLQKVLEILSNRKE</sequence>
<organism>
    <name type="scientific">Dictyostelium discoideum</name>
    <name type="common">Social amoeba</name>
    <dbReference type="NCBI Taxonomy" id="44689"/>
    <lineage>
        <taxon>Eukaryota</taxon>
        <taxon>Amoebozoa</taxon>
        <taxon>Evosea</taxon>
        <taxon>Eumycetozoa</taxon>
        <taxon>Dictyostelia</taxon>
        <taxon>Dictyosteliales</taxon>
        <taxon>Dictyosteliaceae</taxon>
        <taxon>Dictyostelium</taxon>
    </lineage>
</organism>
<keyword id="KW-0963">Cytoplasm</keyword>
<keyword id="KW-0206">Cytoskeleton</keyword>
<keyword id="KW-0290">Folate-binding</keyword>
<keyword id="KW-0333">Golgi apparatus</keyword>
<keyword id="KW-0369">Histidine metabolism</keyword>
<keyword id="KW-0456">Lyase</keyword>
<keyword id="KW-0511">Multifunctional enzyme</keyword>
<keyword id="KW-1185">Reference proteome</keyword>
<keyword id="KW-0808">Transferase</keyword>
<protein>
    <recommendedName>
        <fullName evidence="4">Formimidoyltransferase-cyclodeaminase</fullName>
    </recommendedName>
    <alternativeName>
        <fullName>Formiminotransferase-cyclodeaminase</fullName>
        <shortName>FTCD</shortName>
    </alternativeName>
    <alternativeName>
        <fullName>p60</fullName>
    </alternativeName>
    <domain>
        <recommendedName>
            <fullName evidence="4">Glutamate formimidoyltransferase</fullName>
            <ecNumber evidence="4">2.1.2.5</ecNumber>
        </recommendedName>
        <alternativeName>
            <fullName>Glutamate formiminotransferase</fullName>
        </alternativeName>
        <alternativeName>
            <fullName>Glutamate formyltransferase</fullName>
        </alternativeName>
    </domain>
    <domain>
        <recommendedName>
            <fullName evidence="4">Formimidoyltetrahydrofolate cyclodeaminase</fullName>
            <ecNumber evidence="4">4.3.1.4</ecNumber>
        </recommendedName>
        <alternativeName>
            <fullName>Formiminotetrahydrofolate cyclodeaminase</fullName>
        </alternativeName>
    </domain>
</protein>
<comment type="function">
    <text evidence="3">Folate-dependent enzyme, that displays both transferase and deaminase activity. Serves to channel one-carbon units from formiminoglutamate to the folate pool.</text>
</comment>
<comment type="catalytic activity">
    <reaction evidence="3">
        <text>5-formimidoyltetrahydrofolate + L-glutamate = N-formimidoyl-L-glutamate + (6S)-5,6,7,8-tetrahydrofolate</text>
        <dbReference type="Rhea" id="RHEA:15097"/>
        <dbReference type="ChEBI" id="CHEBI:29985"/>
        <dbReference type="ChEBI" id="CHEBI:57453"/>
        <dbReference type="ChEBI" id="CHEBI:57456"/>
        <dbReference type="ChEBI" id="CHEBI:58928"/>
        <dbReference type="EC" id="2.1.2.5"/>
    </reaction>
    <physiologicalReaction direction="right-to-left" evidence="3">
        <dbReference type="Rhea" id="RHEA:15099"/>
    </physiologicalReaction>
</comment>
<comment type="catalytic activity">
    <reaction evidence="4">
        <text>5-formimidoyltetrahydrofolate + 2 H(+) = (6R)-5,10-methenyltetrahydrofolate + NH4(+)</text>
        <dbReference type="Rhea" id="RHEA:22736"/>
        <dbReference type="ChEBI" id="CHEBI:15378"/>
        <dbReference type="ChEBI" id="CHEBI:28938"/>
        <dbReference type="ChEBI" id="CHEBI:57455"/>
        <dbReference type="ChEBI" id="CHEBI:57456"/>
        <dbReference type="EC" id="4.3.1.4"/>
    </reaction>
    <physiologicalReaction direction="left-to-right" evidence="4">
        <dbReference type="Rhea" id="RHEA:22737"/>
    </physiologicalReaction>
</comment>
<comment type="pathway">
    <text evidence="3">Amino-acid degradation; L-histidine degradation into L-glutamate; L-glutamate from N-formimidoyl-L-glutamate (transferase route): step 1/1.</text>
</comment>
<comment type="subunit">
    <text evidence="2">Homooctamer, including four polyglutamate binding sites. The subunits are arranged as a tetramer of dimers, and form a planar ring-shaped structure.</text>
</comment>
<comment type="subcellular location">
    <subcellularLocation>
        <location evidence="5">Cytoplasm</location>
        <location evidence="5">Cytosol</location>
    </subcellularLocation>
    <subcellularLocation>
        <location evidence="5">Golgi apparatus</location>
    </subcellularLocation>
    <subcellularLocation>
        <location evidence="3">Cytoplasm</location>
        <location evidence="3">Cytoskeleton</location>
        <location evidence="3">Microtubule organizing center</location>
        <location evidence="3">Centrosome</location>
        <location evidence="3">Centriole</location>
    </subcellularLocation>
</comment>
<comment type="similarity">
    <text evidence="7">In the C-terminal section; belongs to the cyclodeaminase/cyclohydrolase family.</text>
</comment>
<comment type="similarity">
    <text evidence="7">In the N-terminal section; belongs to the formiminotransferase family.</text>
</comment>
<feature type="chain" id="PRO_0000328198" description="Formimidoyltransferase-cyclodeaminase">
    <location>
        <begin position="1"/>
        <end position="537"/>
    </location>
</feature>
<feature type="region of interest" description="Formiminotransferase N-subdomain" evidence="1">
    <location>
        <begin position="1"/>
        <end position="181"/>
    </location>
</feature>
<feature type="region of interest" description="Formiminotransferase C-subdomain" evidence="1">
    <location>
        <begin position="182"/>
        <end position="326"/>
    </location>
</feature>
<feature type="region of interest" description="Linker" evidence="1">
    <location>
        <begin position="327"/>
        <end position="335"/>
    </location>
</feature>
<feature type="region of interest" description="Cyclodeaminase/cyclohydrolase" evidence="1">
    <location>
        <begin position="336"/>
        <end position="537"/>
    </location>
</feature>
<feature type="active site" description="For formimidoyltransferase activity" evidence="1">
    <location>
        <position position="82"/>
    </location>
</feature>
<feature type="active site" description="For cyclodeaminase activity" evidence="1">
    <location>
        <position position="413"/>
    </location>
</feature>
<feature type="binding site" evidence="6">
    <location>
        <begin position="163"/>
        <end position="172"/>
    </location>
    <ligand>
        <name>folate</name>
        <dbReference type="ChEBI" id="CHEBI:62501"/>
    </ligand>
</feature>
<accession>Q54JL3</accession>
<evidence type="ECO:0000250" key="1"/>
<evidence type="ECO:0000250" key="2">
    <source>
        <dbReference type="UniProtKB" id="O88618"/>
    </source>
</evidence>
<evidence type="ECO:0000250" key="3">
    <source>
        <dbReference type="UniProtKB" id="O95954"/>
    </source>
</evidence>
<evidence type="ECO:0000250" key="4">
    <source>
        <dbReference type="UniProtKB" id="P53603"/>
    </source>
</evidence>
<evidence type="ECO:0000250" key="5">
    <source>
        <dbReference type="UniProtKB" id="Q9YH58"/>
    </source>
</evidence>
<evidence type="ECO:0000255" key="6"/>
<evidence type="ECO:0000305" key="7"/>
<reference key="1">
    <citation type="journal article" date="2005" name="Nature">
        <title>The genome of the social amoeba Dictyostelium discoideum.</title>
        <authorList>
            <person name="Eichinger L."/>
            <person name="Pachebat J.A."/>
            <person name="Gloeckner G."/>
            <person name="Rajandream M.A."/>
            <person name="Sucgang R."/>
            <person name="Berriman M."/>
            <person name="Song J."/>
            <person name="Olsen R."/>
            <person name="Szafranski K."/>
            <person name="Xu Q."/>
            <person name="Tunggal B."/>
            <person name="Kummerfeld S."/>
            <person name="Madera M."/>
            <person name="Konfortov B.A."/>
            <person name="Rivero F."/>
            <person name="Bankier A.T."/>
            <person name="Lehmann R."/>
            <person name="Hamlin N."/>
            <person name="Davies R."/>
            <person name="Gaudet P."/>
            <person name="Fey P."/>
            <person name="Pilcher K."/>
            <person name="Chen G."/>
            <person name="Saunders D."/>
            <person name="Sodergren E.J."/>
            <person name="Davis P."/>
            <person name="Kerhornou A."/>
            <person name="Nie X."/>
            <person name="Hall N."/>
            <person name="Anjard C."/>
            <person name="Hemphill L."/>
            <person name="Bason N."/>
            <person name="Farbrother P."/>
            <person name="Desany B."/>
            <person name="Just E."/>
            <person name="Morio T."/>
            <person name="Rost R."/>
            <person name="Churcher C.M."/>
            <person name="Cooper J."/>
            <person name="Haydock S."/>
            <person name="van Driessche N."/>
            <person name="Cronin A."/>
            <person name="Goodhead I."/>
            <person name="Muzny D.M."/>
            <person name="Mourier T."/>
            <person name="Pain A."/>
            <person name="Lu M."/>
            <person name="Harper D."/>
            <person name="Lindsay R."/>
            <person name="Hauser H."/>
            <person name="James K.D."/>
            <person name="Quiles M."/>
            <person name="Madan Babu M."/>
            <person name="Saito T."/>
            <person name="Buchrieser C."/>
            <person name="Wardroper A."/>
            <person name="Felder M."/>
            <person name="Thangavelu M."/>
            <person name="Johnson D."/>
            <person name="Knights A."/>
            <person name="Loulseged H."/>
            <person name="Mungall K.L."/>
            <person name="Oliver K."/>
            <person name="Price C."/>
            <person name="Quail M.A."/>
            <person name="Urushihara H."/>
            <person name="Hernandez J."/>
            <person name="Rabbinowitsch E."/>
            <person name="Steffen D."/>
            <person name="Sanders M."/>
            <person name="Ma J."/>
            <person name="Kohara Y."/>
            <person name="Sharp S."/>
            <person name="Simmonds M.N."/>
            <person name="Spiegler S."/>
            <person name="Tivey A."/>
            <person name="Sugano S."/>
            <person name="White B."/>
            <person name="Walker D."/>
            <person name="Woodward J.R."/>
            <person name="Winckler T."/>
            <person name="Tanaka Y."/>
            <person name="Shaulsky G."/>
            <person name="Schleicher M."/>
            <person name="Weinstock G.M."/>
            <person name="Rosenthal A."/>
            <person name="Cox E.C."/>
            <person name="Chisholm R.L."/>
            <person name="Gibbs R.A."/>
            <person name="Loomis W.F."/>
            <person name="Platzer M."/>
            <person name="Kay R.R."/>
            <person name="Williams J.G."/>
            <person name="Dear P.H."/>
            <person name="Noegel A.A."/>
            <person name="Barrell B.G."/>
            <person name="Kuspa A."/>
        </authorList>
    </citation>
    <scope>NUCLEOTIDE SEQUENCE [LARGE SCALE GENOMIC DNA]</scope>
    <source>
        <strain>AX4</strain>
    </source>
</reference>
<dbReference type="EC" id="2.1.2.5" evidence="4"/>
<dbReference type="EC" id="4.3.1.4" evidence="4"/>
<dbReference type="EMBL" id="AAFI02000107">
    <property type="protein sequence ID" value="EAL63414.1"/>
    <property type="molecule type" value="Genomic_DNA"/>
</dbReference>
<dbReference type="RefSeq" id="XP_636918.1">
    <property type="nucleotide sequence ID" value="XM_631826.1"/>
</dbReference>
<dbReference type="SMR" id="Q54JL3"/>
<dbReference type="FunCoup" id="Q54JL3">
    <property type="interactions" value="1"/>
</dbReference>
<dbReference type="STRING" id="44689.Q54JL3"/>
<dbReference type="PaxDb" id="44689-DDB0267047"/>
<dbReference type="EnsemblProtists" id="EAL63414">
    <property type="protein sequence ID" value="EAL63414"/>
    <property type="gene ID" value="DDB_G0287977"/>
</dbReference>
<dbReference type="GeneID" id="8626393"/>
<dbReference type="KEGG" id="ddi:DDB_G0287977"/>
<dbReference type="dictyBase" id="DDB_G0287977">
    <property type="gene designation" value="ftcd"/>
</dbReference>
<dbReference type="VEuPathDB" id="AmoebaDB:DDB_G0287977"/>
<dbReference type="eggNOG" id="ENOG502QQBY">
    <property type="taxonomic scope" value="Eukaryota"/>
</dbReference>
<dbReference type="HOGENOM" id="CLU_040037_1_0_1"/>
<dbReference type="InParanoid" id="Q54JL3"/>
<dbReference type="OMA" id="TYGKRQW"/>
<dbReference type="PhylomeDB" id="Q54JL3"/>
<dbReference type="Reactome" id="R-DDI-70921">
    <property type="pathway name" value="Histidine catabolism"/>
</dbReference>
<dbReference type="UniPathway" id="UPA00379">
    <property type="reaction ID" value="UER00555"/>
</dbReference>
<dbReference type="PRO" id="PR:Q54JL3"/>
<dbReference type="Proteomes" id="UP000002195">
    <property type="component" value="Chromosome 5"/>
</dbReference>
<dbReference type="GO" id="GO:0005814">
    <property type="term" value="C:centriole"/>
    <property type="evidence" value="ECO:0007669"/>
    <property type="project" value="UniProtKB-SubCell"/>
</dbReference>
<dbReference type="GO" id="GO:0005829">
    <property type="term" value="C:cytosol"/>
    <property type="evidence" value="ECO:0007669"/>
    <property type="project" value="UniProtKB-SubCell"/>
</dbReference>
<dbReference type="GO" id="GO:0005794">
    <property type="term" value="C:Golgi apparatus"/>
    <property type="evidence" value="ECO:0007669"/>
    <property type="project" value="UniProtKB-SubCell"/>
</dbReference>
<dbReference type="GO" id="GO:0005542">
    <property type="term" value="F:folic acid binding"/>
    <property type="evidence" value="ECO:0007669"/>
    <property type="project" value="UniProtKB-KW"/>
</dbReference>
<dbReference type="GO" id="GO:0030412">
    <property type="term" value="F:formimidoyltetrahydrofolate cyclodeaminase activity"/>
    <property type="evidence" value="ECO:0007669"/>
    <property type="project" value="UniProtKB-EC"/>
</dbReference>
<dbReference type="GO" id="GO:0030409">
    <property type="term" value="F:glutamate formimidoyltransferase activity"/>
    <property type="evidence" value="ECO:0007669"/>
    <property type="project" value="UniProtKB-EC"/>
</dbReference>
<dbReference type="GO" id="GO:0019556">
    <property type="term" value="P:L-histidine catabolic process to glutamate and formamide"/>
    <property type="evidence" value="ECO:0007669"/>
    <property type="project" value="UniProtKB-UniPathway"/>
</dbReference>
<dbReference type="GO" id="GO:0019557">
    <property type="term" value="P:L-histidine catabolic process to glutamate and formate"/>
    <property type="evidence" value="ECO:0007669"/>
    <property type="project" value="UniProtKB-UniPathway"/>
</dbReference>
<dbReference type="FunFam" id="1.20.120.680:FF:000001">
    <property type="entry name" value="Formimidoyltransferase cyclodeaminase"/>
    <property type="match status" value="1"/>
</dbReference>
<dbReference type="FunFam" id="3.30.990.10:FF:000001">
    <property type="entry name" value="Formimidoyltransferase cyclodeaminase"/>
    <property type="match status" value="1"/>
</dbReference>
<dbReference type="Gene3D" id="1.20.120.680">
    <property type="entry name" value="Formiminotetrahydrofolate cyclodeaminase monomer, up-and-down helical bundle"/>
    <property type="match status" value="1"/>
</dbReference>
<dbReference type="Gene3D" id="3.30.70.670">
    <property type="entry name" value="Formiminotransferase, C-terminal subdomain"/>
    <property type="match status" value="1"/>
</dbReference>
<dbReference type="Gene3D" id="3.30.990.10">
    <property type="entry name" value="Formiminotransferase, N-terminal subdomain"/>
    <property type="match status" value="1"/>
</dbReference>
<dbReference type="InterPro" id="IPR007044">
    <property type="entry name" value="Cyclodeamin/CycHdrlase"/>
</dbReference>
<dbReference type="InterPro" id="IPR013802">
    <property type="entry name" value="Formiminotransferase_C"/>
</dbReference>
<dbReference type="InterPro" id="IPR037070">
    <property type="entry name" value="Formiminotransferase_C_sf"/>
</dbReference>
<dbReference type="InterPro" id="IPR004227">
    <property type="entry name" value="Formiminotransferase_cat"/>
</dbReference>
<dbReference type="InterPro" id="IPR012886">
    <property type="entry name" value="Formiminotransferase_N"/>
</dbReference>
<dbReference type="InterPro" id="IPR037064">
    <property type="entry name" value="Formiminotransferase_N_sf"/>
</dbReference>
<dbReference type="InterPro" id="IPR022384">
    <property type="entry name" value="FormiminoTrfase_cat_dom_sf"/>
</dbReference>
<dbReference type="InterPro" id="IPR036178">
    <property type="entry name" value="Formintransfe-cycloase-like_sf"/>
</dbReference>
<dbReference type="InterPro" id="IPR051623">
    <property type="entry name" value="FTCD"/>
</dbReference>
<dbReference type="NCBIfam" id="TIGR02024">
    <property type="entry name" value="FtcD"/>
    <property type="match status" value="1"/>
</dbReference>
<dbReference type="PANTHER" id="PTHR12234:SF0">
    <property type="entry name" value="FORMIMIDOYLTRANSFERASE-CYCLODEAMINASE"/>
    <property type="match status" value="1"/>
</dbReference>
<dbReference type="PANTHER" id="PTHR12234">
    <property type="entry name" value="FORMIMINOTRANSFERASE-CYCLODEAMINASE"/>
    <property type="match status" value="1"/>
</dbReference>
<dbReference type="Pfam" id="PF02971">
    <property type="entry name" value="FTCD"/>
    <property type="match status" value="1"/>
</dbReference>
<dbReference type="Pfam" id="PF04961">
    <property type="entry name" value="FTCD_C"/>
    <property type="match status" value="1"/>
</dbReference>
<dbReference type="Pfam" id="PF07837">
    <property type="entry name" value="FTCD_N"/>
    <property type="match status" value="1"/>
</dbReference>
<dbReference type="SMART" id="SM01221">
    <property type="entry name" value="FTCD"/>
    <property type="match status" value="1"/>
</dbReference>
<dbReference type="SMART" id="SM01222">
    <property type="entry name" value="FTCD_N"/>
    <property type="match status" value="1"/>
</dbReference>
<dbReference type="SUPFAM" id="SSF55116">
    <property type="entry name" value="Formiminotransferase domain of formiminotransferase-cyclodeaminase"/>
    <property type="match status" value="2"/>
</dbReference>
<dbReference type="SUPFAM" id="SSF101262">
    <property type="entry name" value="Methenyltetrahydrofolate cyclohydrolase-like"/>
    <property type="match status" value="1"/>
</dbReference>
<proteinExistence type="inferred from homology"/>